<keyword id="KW-0131">Cell cycle</keyword>
<keyword id="KW-0132">Cell division</keyword>
<keyword id="KW-0159">Chromosome partition</keyword>
<keyword id="KW-0963">Cytoplasm</keyword>
<keyword id="KW-0498">Mitosis</keyword>
<keyword id="KW-0539">Nucleus</keyword>
<keyword id="KW-1185">Reference proteome</keyword>
<keyword id="KW-0677">Repeat</keyword>
<keyword id="KW-0802">TPR repeat</keyword>
<name>SCC4_ARATH</name>
<reference key="1">
    <citation type="submission" date="1999-04" db="EMBL/GenBank/DDBJ databases">
        <title>Structural analysis of Arabidopsis thaliana chromosome 5. XI.</title>
        <authorList>
            <person name="Kaneko T."/>
            <person name="Katoh T."/>
            <person name="Asamizu E."/>
            <person name="Sato S."/>
            <person name="Nakamura Y."/>
            <person name="Kotani H."/>
            <person name="Tabata S."/>
        </authorList>
    </citation>
    <scope>NUCLEOTIDE SEQUENCE [LARGE SCALE GENOMIC DNA]</scope>
    <source>
        <strain>cv. Columbia</strain>
    </source>
</reference>
<reference key="2">
    <citation type="journal article" date="2017" name="Plant J.">
        <title>Araport11: a complete reannotation of the Arabidopsis thaliana reference genome.</title>
        <authorList>
            <person name="Cheng C.Y."/>
            <person name="Krishnakumar V."/>
            <person name="Chan A.P."/>
            <person name="Thibaud-Nissen F."/>
            <person name="Schobel S."/>
            <person name="Town C.D."/>
        </authorList>
    </citation>
    <scope>GENOME REANNOTATION</scope>
    <source>
        <strain>cv. Columbia</strain>
    </source>
</reference>
<reference key="3">
    <citation type="submission" date="2006-07" db="EMBL/GenBank/DDBJ databases">
        <title>Large-scale analysis of RIKEN Arabidopsis full-length (RAFL) cDNAs.</title>
        <authorList>
            <person name="Totoki Y."/>
            <person name="Seki M."/>
            <person name="Ishida J."/>
            <person name="Nakajima M."/>
            <person name="Enju A."/>
            <person name="Kamiya A."/>
            <person name="Narusaka M."/>
            <person name="Shin-i T."/>
            <person name="Nakagawa M."/>
            <person name="Sakamoto N."/>
            <person name="Oishi K."/>
            <person name="Kohara Y."/>
            <person name="Kobayashi M."/>
            <person name="Toyoda A."/>
            <person name="Sakaki Y."/>
            <person name="Sakurai T."/>
            <person name="Iida K."/>
            <person name="Akiyama K."/>
            <person name="Satou M."/>
            <person name="Toyoda T."/>
            <person name="Konagaya A."/>
            <person name="Carninci P."/>
            <person name="Kawai J."/>
            <person name="Hayashizaki Y."/>
            <person name="Shinozaki K."/>
        </authorList>
    </citation>
    <scope>NUCLEOTIDE SEQUENCE [LARGE SCALE MRNA]</scope>
    <source>
        <strain>cv. Columbia</strain>
    </source>
</reference>
<reference key="4">
    <citation type="journal article" date="2017" name="J. Cell Sci.">
        <title>The Arabidopsis homolog of Scc4/MAU2 is essential for embryogenesis.</title>
        <authorList>
            <person name="Minina E.A."/>
            <person name="Reza S.H."/>
            <person name="Gutierrez-Beltran E."/>
            <person name="Elander P.H."/>
            <person name="Bozhkov P.V."/>
            <person name="Moschou P.N."/>
        </authorList>
    </citation>
    <scope>FUNCTION</scope>
    <scope>DISRUPTION PHENOTYPE</scope>
    <scope>TISSUE SPECIFICITY</scope>
    <scope>INTERACTION WITH SCC2</scope>
    <source>
        <strain>cv. Columbia</strain>
    </source>
</reference>
<evidence type="ECO:0000255" key="1"/>
<evidence type="ECO:0000256" key="2">
    <source>
        <dbReference type="SAM" id="MobiDB-lite"/>
    </source>
</evidence>
<evidence type="ECO:0000269" key="3">
    <source>
    </source>
</evidence>
<evidence type="ECO:0000303" key="4">
    <source>
    </source>
</evidence>
<evidence type="ECO:0000305" key="5"/>
<evidence type="ECO:0000312" key="6">
    <source>
        <dbReference type="Araport" id="AT5G51340"/>
    </source>
</evidence>
<evidence type="ECO:0000312" key="7">
    <source>
        <dbReference type="EMBL" id="BAB09745.1"/>
    </source>
</evidence>
<organism>
    <name type="scientific">Arabidopsis thaliana</name>
    <name type="common">Mouse-ear cress</name>
    <dbReference type="NCBI Taxonomy" id="3702"/>
    <lineage>
        <taxon>Eukaryota</taxon>
        <taxon>Viridiplantae</taxon>
        <taxon>Streptophyta</taxon>
        <taxon>Embryophyta</taxon>
        <taxon>Tracheophyta</taxon>
        <taxon>Spermatophyta</taxon>
        <taxon>Magnoliopsida</taxon>
        <taxon>eudicotyledons</taxon>
        <taxon>Gunneridae</taxon>
        <taxon>Pentapetalae</taxon>
        <taxon>rosids</taxon>
        <taxon>malvids</taxon>
        <taxon>Brassicales</taxon>
        <taxon>Brassicaceae</taxon>
        <taxon>Camelineae</taxon>
        <taxon>Arabidopsis</taxon>
    </lineage>
</organism>
<gene>
    <name evidence="4" type="primary">SCC4</name>
    <name evidence="6" type="ordered locus">At5g51340</name>
    <name evidence="7" type="ORF">MFG13.4</name>
</gene>
<sequence>MEGAAVAEGLWGLADHHQKLGEIGKTIKCLEAICQSQISFLPLVEVKSRLRLAALLLRYSHNVNHAKSHLERSLLLLKSIPSSYDLKFQNYSLLSHCYHLLASFPPQRNLLVKALELASSVPQDISAYLWSCNFNSQLANTFIIQADFPSSLSALESGFLSASHICFPELQMFFTASMLHVHIMQWTDDYSVEKAVQRCDEIWQTISSDKTDRCPGLFFYNEMLHVFYRLRLCDYKNAQHHVDRLDQAMNAHSHKMQEIQQLLDELSSLNLSLSRYDLPSRERSALSARQSQLQDRVNALSPSSSTVNSLEPAYFGNIDRGWTEKLLLSPSPIDGEWLPKSAIDALVHLMVVISGRPKGLFKECSKRIESGLQIIQDELIKLGITDEVREADLRHTAIWMSRVFLMLQMQFLENRVALELTRSDYVEAEEALVDMKNWFTRFPTILQASECMIEMLRGQYSHSVGCYSEAAFHCIEATKLTESISMQASCQAFAAVSYLTIGDAESSSKALDLIGPLNGMTNSLSGVREEASILFAYGLLLMKQRDLQEARNRLAKGLQIAHNHMGNLQLVAQYLTLLGNLALSLHDTVQAREILRSSLTLAKKLYDIPTQLWVLSIFTALYQQLGEKGNEMENEEFRKKKWDELQSRLAEARGSIHHIELVAKARIELYQIDNNPQEQSLVASAQSMQGNLDIPESVGIEGPSPAPSSSRLVGLDTGKRWGKRRM</sequence>
<accession>Q9FGN7</accession>
<accession>Q0WPL4</accession>
<protein>
    <recommendedName>
        <fullName evidence="4">Sister chromatid cohesion protein SCC4</fullName>
    </recommendedName>
    <alternativeName>
        <fullName evidence="4">Protein SISTER-CHROMATID COHESION 4</fullName>
        <shortName evidence="4">AtSCC4</shortName>
    </alternativeName>
</protein>
<dbReference type="EMBL" id="AB025621">
    <property type="protein sequence ID" value="BAB09745.1"/>
    <property type="molecule type" value="Genomic_DNA"/>
</dbReference>
<dbReference type="EMBL" id="CP002688">
    <property type="protein sequence ID" value="AED96068.1"/>
    <property type="molecule type" value="Genomic_DNA"/>
</dbReference>
<dbReference type="EMBL" id="AK229053">
    <property type="protein sequence ID" value="BAF00935.1"/>
    <property type="molecule type" value="mRNA"/>
</dbReference>
<dbReference type="RefSeq" id="NP_199947.1">
    <property type="nucleotide sequence ID" value="NM_124513.3"/>
</dbReference>
<dbReference type="FunCoup" id="Q9FGN7">
    <property type="interactions" value="4612"/>
</dbReference>
<dbReference type="STRING" id="3702.Q9FGN7"/>
<dbReference type="PaxDb" id="3702-AT5G51340.1"/>
<dbReference type="ProteomicsDB" id="232915"/>
<dbReference type="EnsemblPlants" id="AT5G51340.1">
    <property type="protein sequence ID" value="AT5G51340.1"/>
    <property type="gene ID" value="AT5G51340"/>
</dbReference>
<dbReference type="GeneID" id="835208"/>
<dbReference type="Gramene" id="AT5G51340.1">
    <property type="protein sequence ID" value="AT5G51340.1"/>
    <property type="gene ID" value="AT5G51340"/>
</dbReference>
<dbReference type="KEGG" id="ath:AT5G51340"/>
<dbReference type="Araport" id="AT5G51340"/>
<dbReference type="TAIR" id="AT5G51340">
    <property type="gene designation" value="SCC4"/>
</dbReference>
<dbReference type="eggNOG" id="KOG2300">
    <property type="taxonomic scope" value="Eukaryota"/>
</dbReference>
<dbReference type="HOGENOM" id="CLU_027111_0_0_1"/>
<dbReference type="InParanoid" id="Q9FGN7"/>
<dbReference type="OMA" id="QDAWYLS"/>
<dbReference type="OrthoDB" id="5565328at2759"/>
<dbReference type="PhylomeDB" id="Q9FGN7"/>
<dbReference type="PRO" id="PR:Q9FGN7"/>
<dbReference type="Proteomes" id="UP000006548">
    <property type="component" value="Chromosome 5"/>
</dbReference>
<dbReference type="ExpressionAtlas" id="Q9FGN7">
    <property type="expression patterns" value="baseline and differential"/>
</dbReference>
<dbReference type="GO" id="GO:0005737">
    <property type="term" value="C:cytoplasm"/>
    <property type="evidence" value="ECO:0000314"/>
    <property type="project" value="TAIR"/>
</dbReference>
<dbReference type="GO" id="GO:0005634">
    <property type="term" value="C:nucleus"/>
    <property type="evidence" value="ECO:0000314"/>
    <property type="project" value="TAIR"/>
</dbReference>
<dbReference type="GO" id="GO:0051301">
    <property type="term" value="P:cell division"/>
    <property type="evidence" value="ECO:0007669"/>
    <property type="project" value="UniProtKB-KW"/>
</dbReference>
<dbReference type="GO" id="GO:0007059">
    <property type="term" value="P:chromosome segregation"/>
    <property type="evidence" value="ECO:0007669"/>
    <property type="project" value="UniProtKB-KW"/>
</dbReference>
<dbReference type="GO" id="GO:0009793">
    <property type="term" value="P:embryo development ending in seed dormancy"/>
    <property type="evidence" value="ECO:0000315"/>
    <property type="project" value="TAIR"/>
</dbReference>
<dbReference type="GO" id="GO:0007064">
    <property type="term" value="P:mitotic sister chromatid cohesion"/>
    <property type="evidence" value="ECO:0007669"/>
    <property type="project" value="InterPro"/>
</dbReference>
<dbReference type="FunFam" id="1.25.40.10:FF:000614">
    <property type="entry name" value="Sister chromatid cohesion protein SCC4"/>
    <property type="match status" value="1"/>
</dbReference>
<dbReference type="Gene3D" id="1.25.40.10">
    <property type="entry name" value="Tetratricopeptide repeat domain"/>
    <property type="match status" value="1"/>
</dbReference>
<dbReference type="InterPro" id="IPR019440">
    <property type="entry name" value="MAU2"/>
</dbReference>
<dbReference type="InterPro" id="IPR011990">
    <property type="entry name" value="TPR-like_helical_dom_sf"/>
</dbReference>
<dbReference type="InterPro" id="IPR019734">
    <property type="entry name" value="TPR_rpt"/>
</dbReference>
<dbReference type="PANTHER" id="PTHR21394">
    <property type="entry name" value="MAU2 CHROMATID COHESION FACTOR HOMOLOG"/>
    <property type="match status" value="1"/>
</dbReference>
<dbReference type="Pfam" id="PF10345">
    <property type="entry name" value="Cohesin_load"/>
    <property type="match status" value="1"/>
</dbReference>
<dbReference type="SMART" id="SM00028">
    <property type="entry name" value="TPR"/>
    <property type="match status" value="3"/>
</dbReference>
<dbReference type="SUPFAM" id="SSF48452">
    <property type="entry name" value="TPR-like"/>
    <property type="match status" value="1"/>
</dbReference>
<proteinExistence type="evidence at protein level"/>
<comment type="function">
    <text evidence="3">Essential protein required for cell fate determination during embryogenesis. Involved in sister chromatid cohesion. Forms a complex with SCC2, which is required for the association of the cohesin complex with chromosomes.</text>
</comment>
<comment type="subunit">
    <text evidence="3">Interacts with SCC2 to form the cohesin loading complex.</text>
</comment>
<comment type="subcellular location">
    <subcellularLocation>
        <location evidence="3">Nucleus</location>
    </subcellularLocation>
    <subcellularLocation>
        <location evidence="3">Cytoplasm</location>
    </subcellularLocation>
    <text evidence="3">Associates with chromatin, especially during telophase, prophase and interphase. Mostly localized in the nucleus during interphase and preprophase stages, but not in the nucleolus. During prometaphase, metaphase, anaphase and telophase, mostly cytoplasmic.</text>
</comment>
<comment type="tissue specificity">
    <text evidence="3">Expressed ubiquitously.</text>
</comment>
<comment type="disruption phenotype">
    <text evidence="3">Defective embryo arrested at preglobular/early globular stage. Suspensor overproliferation phenotype preceded by ectopic auxin maxima distribution. Reduced efficacy of cohesin immobilization in nuclei.</text>
</comment>
<comment type="similarity">
    <text evidence="5">Belongs to the SCC4/mau-2 family.</text>
</comment>
<feature type="chain" id="PRO_0000440651" description="Sister chromatid cohesion protein SCC4">
    <location>
        <begin position="1"/>
        <end position="726"/>
    </location>
</feature>
<feature type="repeat" description="TPR 1" evidence="1">
    <location>
        <begin position="7"/>
        <end position="40"/>
    </location>
</feature>
<feature type="repeat" description="TPR 2" evidence="1">
    <location>
        <begin position="88"/>
        <end position="121"/>
    </location>
</feature>
<feature type="repeat" description="TPR 3" evidence="1">
    <location>
        <begin position="132"/>
        <end position="165"/>
    </location>
</feature>
<feature type="repeat" description="TPR 4" evidence="1">
    <location>
        <begin position="229"/>
        <end position="262"/>
    </location>
</feature>
<feature type="repeat" description="TPR 5" evidence="1">
    <location>
        <begin position="443"/>
        <end position="477"/>
    </location>
</feature>
<feature type="repeat" description="TPR 6" evidence="1">
    <location>
        <begin position="531"/>
        <end position="564"/>
    </location>
</feature>
<feature type="repeat" description="TPR 7" evidence="1">
    <location>
        <begin position="572"/>
        <end position="605"/>
    </location>
</feature>
<feature type="region of interest" description="Disordered" evidence="2">
    <location>
        <begin position="697"/>
        <end position="726"/>
    </location>
</feature>
<feature type="sequence conflict" description="In Ref. 3; BAF00935." evidence="5" ref="3">
    <original>N</original>
    <variation>K</variation>
    <location>
        <position position="437"/>
    </location>
</feature>